<name>ALBO1_BOAAL</name>
<proteinExistence type="evidence at protein level"/>
<accession>P85982</accession>
<comment type="function">
    <text evidence="1">Has antibacterial activity against the Gram-positive bacteria S.aureus ATCC 25926 (MIC=8 uM), E.faecalis ATCC 29212 (MIC=16 uM), and B.subtilis ATCC 19659 (MIC=8 uM). Has a less potent antibacterial activity against the Gram-negative bacteria E.coli ATCC 25922 (MIC=32 uM), and P.aeruginosa ATCC 27853 (MIC=64 uM). Has antifungal activity against C.albicans ATCC 90028 (MIC=16.7 uM), C.krusei ATCC 6258 (MIC=16.7 uM), C.parapsilosis ATCC 22019 (MIC=67 uM), and C.neoformans ATCC 90012 (MIC=33.5 uM). Has hemolytic activity against human erythrocytes (HC50=18 uM).</text>
</comment>
<comment type="subcellular location">
    <subcellularLocation>
        <location evidence="3">Secreted</location>
    </subcellularLocation>
</comment>
<comment type="tissue specificity">
    <text evidence="3">Expressed by the skin glands.</text>
</comment>
<comment type="mass spectrometry"/>
<feature type="peptide" id="PRO_0000371455" description="Hylin-a1">
    <location>
        <begin position="1"/>
        <end position="18"/>
    </location>
</feature>
<feature type="modified residue" description="Lysine amide" evidence="1">
    <location>
        <position position="18"/>
    </location>
</feature>
<feature type="helix" evidence="4">
    <location>
        <begin position="2"/>
        <end position="17"/>
    </location>
</feature>
<evidence type="ECO:0000269" key="1">
    <source>
    </source>
</evidence>
<evidence type="ECO:0000303" key="2">
    <source>
    </source>
</evidence>
<evidence type="ECO:0000305" key="3"/>
<evidence type="ECO:0007829" key="4">
    <source>
        <dbReference type="PDB" id="2N0O"/>
    </source>
</evidence>
<keyword id="KW-0002">3D-structure</keyword>
<keyword id="KW-0027">Amidation</keyword>
<keyword id="KW-0878">Amphibian defense peptide</keyword>
<keyword id="KW-0044">Antibiotic</keyword>
<keyword id="KW-0929">Antimicrobial</keyword>
<keyword id="KW-0204">Cytolysis</keyword>
<keyword id="KW-0903">Direct protein sequencing</keyword>
<keyword id="KW-0295">Fungicide</keyword>
<keyword id="KW-0354">Hemolysis</keyword>
<keyword id="KW-0964">Secreted</keyword>
<organism>
    <name type="scientific">Boana albopunctata</name>
    <name type="common">Spotted tree frog</name>
    <name type="synonym">Hypsiboas albopunctatus</name>
    <dbReference type="NCBI Taxonomy" id="279985"/>
    <lineage>
        <taxon>Eukaryota</taxon>
        <taxon>Metazoa</taxon>
        <taxon>Chordata</taxon>
        <taxon>Craniata</taxon>
        <taxon>Vertebrata</taxon>
        <taxon>Euteleostomi</taxon>
        <taxon>Amphibia</taxon>
        <taxon>Batrachia</taxon>
        <taxon>Anura</taxon>
        <taxon>Neobatrachia</taxon>
        <taxon>Hyloidea</taxon>
        <taxon>Hylidae</taxon>
        <taxon>Hylinae</taxon>
        <taxon>Cophomantini</taxon>
        <taxon>Boana</taxon>
    </lineage>
</organism>
<protein>
    <recommendedName>
        <fullName>Hylin-a1</fullName>
        <shortName evidence="2">Hy-a1</shortName>
    </recommendedName>
</protein>
<sequence>IFGAILPLALGALKNLIK</sequence>
<dbReference type="PDB" id="2N0O">
    <property type="method" value="NMR"/>
    <property type="chains" value="A=1-18"/>
</dbReference>
<dbReference type="PDB" id="5J6T">
    <property type="method" value="NMR"/>
    <property type="chains" value="A=1-18"/>
</dbReference>
<dbReference type="PDB" id="5J6V">
    <property type="method" value="NMR"/>
    <property type="chains" value="A=1-18"/>
</dbReference>
<dbReference type="PDB" id="5J6W">
    <property type="method" value="NMR"/>
    <property type="chains" value="A=1-18"/>
</dbReference>
<dbReference type="PDBsum" id="2N0O"/>
<dbReference type="PDBsum" id="5J6T"/>
<dbReference type="PDBsum" id="5J6V"/>
<dbReference type="PDBsum" id="5J6W"/>
<dbReference type="BMRB" id="P85982"/>
<dbReference type="SMR" id="P85982"/>
<dbReference type="EvolutionaryTrace" id="P85982"/>
<dbReference type="GO" id="GO:0005576">
    <property type="term" value="C:extracellular region"/>
    <property type="evidence" value="ECO:0007669"/>
    <property type="project" value="UniProtKB-SubCell"/>
</dbReference>
<dbReference type="GO" id="GO:0042742">
    <property type="term" value="P:defense response to bacterium"/>
    <property type="evidence" value="ECO:0007669"/>
    <property type="project" value="UniProtKB-KW"/>
</dbReference>
<dbReference type="GO" id="GO:0050832">
    <property type="term" value="P:defense response to fungus"/>
    <property type="evidence" value="ECO:0007669"/>
    <property type="project" value="UniProtKB-KW"/>
</dbReference>
<dbReference type="GO" id="GO:0031640">
    <property type="term" value="P:killing of cells of another organism"/>
    <property type="evidence" value="ECO:0007669"/>
    <property type="project" value="UniProtKB-KW"/>
</dbReference>
<reference evidence="3" key="1">
    <citation type="journal article" date="2009" name="Peptides">
        <title>Hylin a1, the first cytolytic peptide isolated from the arboreal South American frog Hypsiboas albopunctatus ('spotted treefrog').</title>
        <authorList>
            <person name="Castro M.S."/>
            <person name="Ferreira T.C.G."/>
            <person name="Cilli E.M."/>
            <person name="Crusca E. Jr."/>
            <person name="Mendes-Giannini M.J.S."/>
            <person name="Sebben A."/>
            <person name="Ricart C.A.O."/>
            <person name="Sousa M.V."/>
            <person name="Fontes W."/>
        </authorList>
    </citation>
    <scope>PROTEIN SEQUENCE</scope>
    <scope>FUNCTION</scope>
    <scope>MASS SPECTROMETRY</scope>
    <scope>AMIDATION AT LYS-18</scope>
    <source>
        <tissue evidence="1">Skin secretion</tissue>
    </source>
</reference>